<accession>Q9SK67</accession>
<feature type="chain" id="PRO_0000290431" description="Ethylene-responsive transcription factor ERF120">
    <location>
        <begin position="1"/>
        <end position="158"/>
    </location>
</feature>
<feature type="DNA-binding region" description="AP2/ERF" evidence="2">
    <location>
        <begin position="86"/>
        <end position="147"/>
    </location>
</feature>
<feature type="region of interest" description="Disordered" evidence="3">
    <location>
        <begin position="134"/>
        <end position="158"/>
    </location>
</feature>
<feature type="compositionally biased region" description="Basic and acidic residues" evidence="3">
    <location>
        <begin position="144"/>
        <end position="158"/>
    </location>
</feature>
<gene>
    <name type="primary">ERF120</name>
    <name type="ordered locus">At2g20350</name>
    <name type="ORF">F11A3.10</name>
</gene>
<name>EF120_ARATH</name>
<keyword id="KW-0010">Activator</keyword>
<keyword id="KW-0238">DNA-binding</keyword>
<keyword id="KW-0936">Ethylene signaling pathway</keyword>
<keyword id="KW-0539">Nucleus</keyword>
<keyword id="KW-1185">Reference proteome</keyword>
<keyword id="KW-0804">Transcription</keyword>
<keyword id="KW-0805">Transcription regulation</keyword>
<evidence type="ECO:0000250" key="1"/>
<evidence type="ECO:0000255" key="2">
    <source>
        <dbReference type="PROSITE-ProRule" id="PRU00366"/>
    </source>
</evidence>
<evidence type="ECO:0000256" key="3">
    <source>
        <dbReference type="SAM" id="MobiDB-lite"/>
    </source>
</evidence>
<evidence type="ECO:0000305" key="4"/>
<dbReference type="EMBL" id="AY560881">
    <property type="protein sequence ID" value="AAT44948.1"/>
    <property type="molecule type" value="mRNA"/>
</dbReference>
<dbReference type="EMBL" id="AC006569">
    <property type="protein sequence ID" value="AAD21753.1"/>
    <property type="molecule type" value="Genomic_DNA"/>
</dbReference>
<dbReference type="EMBL" id="CP002685">
    <property type="protein sequence ID" value="AEC06996.1"/>
    <property type="molecule type" value="Genomic_DNA"/>
</dbReference>
<dbReference type="EMBL" id="BT024698">
    <property type="protein sequence ID" value="ABD57523.1"/>
    <property type="molecule type" value="mRNA"/>
</dbReference>
<dbReference type="PIR" id="B84588">
    <property type="entry name" value="B84588"/>
</dbReference>
<dbReference type="RefSeq" id="NP_179625.1">
    <property type="nucleotide sequence ID" value="NM_127594.2"/>
</dbReference>
<dbReference type="SMR" id="Q9SK67"/>
<dbReference type="BioGRID" id="1907">
    <property type="interactions" value="2"/>
</dbReference>
<dbReference type="IntAct" id="Q9SK67">
    <property type="interactions" value="5"/>
</dbReference>
<dbReference type="STRING" id="3702.Q9SK67"/>
<dbReference type="iPTMnet" id="Q9SK67"/>
<dbReference type="PaxDb" id="3702-AT2G20350.1"/>
<dbReference type="EnsemblPlants" id="AT2G20350.1">
    <property type="protein sequence ID" value="AT2G20350.1"/>
    <property type="gene ID" value="AT2G20350"/>
</dbReference>
<dbReference type="GeneID" id="816554"/>
<dbReference type="Gramene" id="AT2G20350.1">
    <property type="protein sequence ID" value="AT2G20350.1"/>
    <property type="gene ID" value="AT2G20350"/>
</dbReference>
<dbReference type="KEGG" id="ath:AT2G20350"/>
<dbReference type="Araport" id="AT2G20350"/>
<dbReference type="TAIR" id="AT2G20350"/>
<dbReference type="HOGENOM" id="CLU_1637728_0_0_1"/>
<dbReference type="InParanoid" id="Q9SK67"/>
<dbReference type="OMA" id="AHPMEVC"/>
<dbReference type="OrthoDB" id="49610at2759"/>
<dbReference type="PhylomeDB" id="Q9SK67"/>
<dbReference type="PRO" id="PR:Q9SK67"/>
<dbReference type="Proteomes" id="UP000006548">
    <property type="component" value="Chromosome 2"/>
</dbReference>
<dbReference type="ExpressionAtlas" id="Q9SK67">
    <property type="expression patterns" value="baseline and differential"/>
</dbReference>
<dbReference type="GO" id="GO:0005634">
    <property type="term" value="C:nucleus"/>
    <property type="evidence" value="ECO:0007669"/>
    <property type="project" value="UniProtKB-SubCell"/>
</dbReference>
<dbReference type="GO" id="GO:0003677">
    <property type="term" value="F:DNA binding"/>
    <property type="evidence" value="ECO:0007669"/>
    <property type="project" value="UniProtKB-KW"/>
</dbReference>
<dbReference type="GO" id="GO:0003700">
    <property type="term" value="F:DNA-binding transcription factor activity"/>
    <property type="evidence" value="ECO:0000250"/>
    <property type="project" value="TAIR"/>
</dbReference>
<dbReference type="GO" id="GO:0009873">
    <property type="term" value="P:ethylene-activated signaling pathway"/>
    <property type="evidence" value="ECO:0007669"/>
    <property type="project" value="UniProtKB-KW"/>
</dbReference>
<dbReference type="CDD" id="cd00018">
    <property type="entry name" value="AP2"/>
    <property type="match status" value="1"/>
</dbReference>
<dbReference type="FunFam" id="3.30.730.10:FF:000011">
    <property type="entry name" value="Ethylene-responsive transcription factor ERF120"/>
    <property type="match status" value="1"/>
</dbReference>
<dbReference type="Gene3D" id="3.30.730.10">
    <property type="entry name" value="AP2/ERF domain"/>
    <property type="match status" value="1"/>
</dbReference>
<dbReference type="InterPro" id="IPR001471">
    <property type="entry name" value="AP2/ERF_dom"/>
</dbReference>
<dbReference type="InterPro" id="IPR036955">
    <property type="entry name" value="AP2/ERF_dom_sf"/>
</dbReference>
<dbReference type="InterPro" id="IPR050913">
    <property type="entry name" value="AP2/ERF_ERF_subfamily"/>
</dbReference>
<dbReference type="InterPro" id="IPR016177">
    <property type="entry name" value="DNA-bd_dom_sf"/>
</dbReference>
<dbReference type="PANTHER" id="PTHR31194:SF222">
    <property type="entry name" value="ETHYLENE-RESPONSIVE TRANSCRIPTION FACTOR ERF120-RELATED"/>
    <property type="match status" value="1"/>
</dbReference>
<dbReference type="PANTHER" id="PTHR31194">
    <property type="entry name" value="SHN SHINE , DNA BINDING / TRANSCRIPTION FACTOR"/>
    <property type="match status" value="1"/>
</dbReference>
<dbReference type="Pfam" id="PF00847">
    <property type="entry name" value="AP2"/>
    <property type="match status" value="1"/>
</dbReference>
<dbReference type="PRINTS" id="PR00367">
    <property type="entry name" value="ETHRSPELEMNT"/>
</dbReference>
<dbReference type="SMART" id="SM00380">
    <property type="entry name" value="AP2"/>
    <property type="match status" value="1"/>
</dbReference>
<dbReference type="SUPFAM" id="SSF54171">
    <property type="entry name" value="DNA-binding domain"/>
    <property type="match status" value="1"/>
</dbReference>
<dbReference type="PROSITE" id="PS51032">
    <property type="entry name" value="AP2_ERF"/>
    <property type="match status" value="1"/>
</dbReference>
<organism>
    <name type="scientific">Arabidopsis thaliana</name>
    <name type="common">Mouse-ear cress</name>
    <dbReference type="NCBI Taxonomy" id="3702"/>
    <lineage>
        <taxon>Eukaryota</taxon>
        <taxon>Viridiplantae</taxon>
        <taxon>Streptophyta</taxon>
        <taxon>Embryophyta</taxon>
        <taxon>Tracheophyta</taxon>
        <taxon>Spermatophyta</taxon>
        <taxon>Magnoliopsida</taxon>
        <taxon>eudicotyledons</taxon>
        <taxon>Gunneridae</taxon>
        <taxon>Pentapetalae</taxon>
        <taxon>rosids</taxon>
        <taxon>malvids</taxon>
        <taxon>Brassicales</taxon>
        <taxon>Brassicaceae</taxon>
        <taxon>Camelineae</taxon>
        <taxon>Arabidopsis</taxon>
    </lineage>
</organism>
<protein>
    <recommendedName>
        <fullName>Ethylene-responsive transcription factor ERF120</fullName>
    </recommendedName>
</protein>
<proteinExistence type="evidence at protein level"/>
<comment type="function">
    <text evidence="1">Probably acts as a transcriptional activator. Binds to the GCC-box pathogenesis-related promoter element. May be involved in the regulation of gene expression by stress factors and by components of stress signal transduction pathways (By similarity).</text>
</comment>
<comment type="interaction">
    <interactant intactId="EBI-25515179">
        <id>Q9SK67</id>
    </interactant>
    <interactant intactId="EBI-25511270">
        <id>Q9FX36</id>
        <label>MYB54</label>
    </interactant>
    <organismsDiffer>false</organismsDiffer>
    <experiments>3</experiments>
</comment>
<comment type="interaction">
    <interactant intactId="EBI-25515179">
        <id>Q9SK67</id>
    </interactant>
    <interactant intactId="EBI-15395779">
        <id>Q8H125</id>
        <label>SCL5</label>
    </interactant>
    <organismsDiffer>false</organismsDiffer>
    <experiments>3</experiments>
</comment>
<comment type="subcellular location">
    <subcellularLocation>
        <location evidence="4">Nucleus</location>
    </subcellularLocation>
</comment>
<comment type="similarity">
    <text evidence="4">Belongs to the AP2/ERF transcription factor family. ERF subfamily.</text>
</comment>
<sequence length="158" mass="17461">MENSENVPSYDQNINFTPNLTRDQEHVIMVSALQQVISNVGGDTNSNAWEADLPPLNAGPCPLCSVTGCYGCVFPRHEAIIKKEKKHKGVRKKPSGKWAAEIWDPSLKVRRWLGTFPTAEMAAKAYNDAAAEFVGRRSARRGTKNGEEASTKKTTEKN</sequence>
<reference key="1">
    <citation type="submission" date="2004-02" db="EMBL/GenBank/DDBJ databases">
        <title>Molecular cloning, expression, phylogenetic and functional characterization of the Arabidopsis AP2/EREBP transcription factor family.</title>
        <authorList>
            <person name="Pan Y."/>
            <person name="Gong W."/>
            <person name="Liu D."/>
            <person name="Fu Q."/>
            <person name="Mei W.-Q."/>
            <person name="Song W.-Q."/>
            <person name="Ma L.-G."/>
            <person name="Luo J.-C."/>
            <person name="Deng X.-W."/>
            <person name="Zhu Y.-X."/>
        </authorList>
    </citation>
    <scope>NUCLEOTIDE SEQUENCE [MRNA]</scope>
</reference>
<reference key="2">
    <citation type="journal article" date="1999" name="Nature">
        <title>Sequence and analysis of chromosome 2 of the plant Arabidopsis thaliana.</title>
        <authorList>
            <person name="Lin X."/>
            <person name="Kaul S."/>
            <person name="Rounsley S.D."/>
            <person name="Shea T.P."/>
            <person name="Benito M.-I."/>
            <person name="Town C.D."/>
            <person name="Fujii C.Y."/>
            <person name="Mason T.M."/>
            <person name="Bowman C.L."/>
            <person name="Barnstead M.E."/>
            <person name="Feldblyum T.V."/>
            <person name="Buell C.R."/>
            <person name="Ketchum K.A."/>
            <person name="Lee J.J."/>
            <person name="Ronning C.M."/>
            <person name="Koo H.L."/>
            <person name="Moffat K.S."/>
            <person name="Cronin L.A."/>
            <person name="Shen M."/>
            <person name="Pai G."/>
            <person name="Van Aken S."/>
            <person name="Umayam L."/>
            <person name="Tallon L.J."/>
            <person name="Gill J.E."/>
            <person name="Adams M.D."/>
            <person name="Carrera A.J."/>
            <person name="Creasy T.H."/>
            <person name="Goodman H.M."/>
            <person name="Somerville C.R."/>
            <person name="Copenhaver G.P."/>
            <person name="Preuss D."/>
            <person name="Nierman W.C."/>
            <person name="White O."/>
            <person name="Eisen J.A."/>
            <person name="Salzberg S.L."/>
            <person name="Fraser C.M."/>
            <person name="Venter J.C."/>
        </authorList>
    </citation>
    <scope>NUCLEOTIDE SEQUENCE [LARGE SCALE GENOMIC DNA]</scope>
    <source>
        <strain>cv. Columbia</strain>
    </source>
</reference>
<reference key="3">
    <citation type="journal article" date="2017" name="Plant J.">
        <title>Araport11: a complete reannotation of the Arabidopsis thaliana reference genome.</title>
        <authorList>
            <person name="Cheng C.Y."/>
            <person name="Krishnakumar V."/>
            <person name="Chan A.P."/>
            <person name="Thibaud-Nissen F."/>
            <person name="Schobel S."/>
            <person name="Town C.D."/>
        </authorList>
    </citation>
    <scope>GENOME REANNOTATION</scope>
    <source>
        <strain>cv. Columbia</strain>
    </source>
</reference>
<reference key="4">
    <citation type="submission" date="2006-02" db="EMBL/GenBank/DDBJ databases">
        <title>Arabidopsis ORF clones.</title>
        <authorList>
            <person name="Kim C.J."/>
            <person name="Chen H."/>
            <person name="Shinn P."/>
            <person name="Ecker J.R."/>
        </authorList>
    </citation>
    <scope>NUCLEOTIDE SEQUENCE [LARGE SCALE MRNA]</scope>
    <source>
        <strain>cv. Columbia</strain>
    </source>
</reference>
<reference key="5">
    <citation type="journal article" date="2006" name="Plant Physiol.">
        <title>Genome-wide analysis of the ERF gene family in Arabidopsis and rice.</title>
        <authorList>
            <person name="Nakano T."/>
            <person name="Suzuki K."/>
            <person name="Fujimura T."/>
            <person name="Shinshi H."/>
        </authorList>
    </citation>
    <scope>GENE FAMILY</scope>
    <scope>NOMENCLATURE</scope>
</reference>